<keyword id="KW-0378">Hydrolase</keyword>
<keyword id="KW-0479">Metal-binding</keyword>
<keyword id="KW-0862">Zinc</keyword>
<name>MSHB_MYCVP</name>
<accession>A1TDR0</accession>
<gene>
    <name evidence="1" type="primary">mshB</name>
    <name type="ordered locus">Mvan_4535</name>
</gene>
<sequence length="284" mass="30238">METARLLFVHAHPDDETLTTGATIAHYVARGAQVHVITCTLGEEGEVIGDEWAQLAVDRADQLGGYRIGELTAALAELGVDRPRFLGGAGRWRDSGMDGTPARQQQRFVDGDFAEQTATLAAAIDELRPHVVVTYDPNGGYGHPDHIHAHRVTTAAVAASTWQVPKLYWTVTSSSALAAALASMGAVPEEWIRVSADDLPLFGYSDEAIDAALDLTAHESARVAALRAHRTQVSVSPDGRSFALSNNVALPVDPTEYYVLAAGSAGARDERGWETDLLSGLSVG</sequence>
<evidence type="ECO:0000255" key="1">
    <source>
        <dbReference type="HAMAP-Rule" id="MF_01696"/>
    </source>
</evidence>
<feature type="chain" id="PRO_0000400209" description="1D-myo-inositol 2-acetamido-2-deoxy-alpha-D-glucopyranoside deacetylase">
    <location>
        <begin position="1"/>
        <end position="284"/>
    </location>
</feature>
<feature type="binding site" evidence="1">
    <location>
        <position position="12"/>
    </location>
    <ligand>
        <name>Zn(2+)</name>
        <dbReference type="ChEBI" id="CHEBI:29105"/>
    </ligand>
</feature>
<feature type="binding site" evidence="1">
    <location>
        <position position="15"/>
    </location>
    <ligand>
        <name>Zn(2+)</name>
        <dbReference type="ChEBI" id="CHEBI:29105"/>
    </ligand>
</feature>
<feature type="binding site" evidence="1">
    <location>
        <position position="146"/>
    </location>
    <ligand>
        <name>Zn(2+)</name>
        <dbReference type="ChEBI" id="CHEBI:29105"/>
    </ligand>
</feature>
<dbReference type="EC" id="3.5.1.103" evidence="1"/>
<dbReference type="EMBL" id="CP000511">
    <property type="protein sequence ID" value="ABM15310.1"/>
    <property type="molecule type" value="Genomic_DNA"/>
</dbReference>
<dbReference type="RefSeq" id="WP_011781687.1">
    <property type="nucleotide sequence ID" value="NZ_JACKSD010000139.1"/>
</dbReference>
<dbReference type="SMR" id="A1TDR0"/>
<dbReference type="STRING" id="350058.Mvan_4535"/>
<dbReference type="KEGG" id="mva:Mvan_4535"/>
<dbReference type="eggNOG" id="COG2120">
    <property type="taxonomic scope" value="Bacteria"/>
</dbReference>
<dbReference type="HOGENOM" id="CLU_049311_2_1_11"/>
<dbReference type="Proteomes" id="UP000009159">
    <property type="component" value="Chromosome"/>
</dbReference>
<dbReference type="GO" id="GO:0035595">
    <property type="term" value="F:N-acetylglucosaminylinositol deacetylase activity"/>
    <property type="evidence" value="ECO:0007669"/>
    <property type="project" value="UniProtKB-EC"/>
</dbReference>
<dbReference type="GO" id="GO:0008270">
    <property type="term" value="F:zinc ion binding"/>
    <property type="evidence" value="ECO:0007669"/>
    <property type="project" value="UniProtKB-UniRule"/>
</dbReference>
<dbReference type="GO" id="GO:0010125">
    <property type="term" value="P:mycothiol biosynthetic process"/>
    <property type="evidence" value="ECO:0007669"/>
    <property type="project" value="UniProtKB-UniRule"/>
</dbReference>
<dbReference type="Gene3D" id="3.40.50.10320">
    <property type="entry name" value="LmbE-like"/>
    <property type="match status" value="1"/>
</dbReference>
<dbReference type="HAMAP" id="MF_01696">
    <property type="entry name" value="MshB"/>
    <property type="match status" value="1"/>
</dbReference>
<dbReference type="InterPro" id="IPR003737">
    <property type="entry name" value="GlcNAc_PI_deacetylase-related"/>
</dbReference>
<dbReference type="InterPro" id="IPR024078">
    <property type="entry name" value="LmbE-like_dom_sf"/>
</dbReference>
<dbReference type="InterPro" id="IPR017810">
    <property type="entry name" value="Mycothiol_biosynthesis_MshB"/>
</dbReference>
<dbReference type="NCBIfam" id="TIGR03445">
    <property type="entry name" value="mycothiol_MshB"/>
    <property type="match status" value="1"/>
</dbReference>
<dbReference type="PANTHER" id="PTHR12993:SF26">
    <property type="entry name" value="1D-MYO-INOSITOL 2-ACETAMIDO-2-DEOXY-ALPHA-D-GLUCOPYRANOSIDE DEACETYLASE"/>
    <property type="match status" value="1"/>
</dbReference>
<dbReference type="PANTHER" id="PTHR12993">
    <property type="entry name" value="N-ACETYLGLUCOSAMINYL-PHOSPHATIDYLINOSITOL DE-N-ACETYLASE-RELATED"/>
    <property type="match status" value="1"/>
</dbReference>
<dbReference type="Pfam" id="PF02585">
    <property type="entry name" value="PIG-L"/>
    <property type="match status" value="1"/>
</dbReference>
<dbReference type="SUPFAM" id="SSF102588">
    <property type="entry name" value="LmbE-like"/>
    <property type="match status" value="1"/>
</dbReference>
<comment type="function">
    <text evidence="1">Catalyzes the deacetylation of 1D-myo-inositol 2-acetamido-2-deoxy-alpha-D-glucopyranoside (GlcNAc-Ins) in the mycothiol biosynthesis pathway.</text>
</comment>
<comment type="catalytic activity">
    <reaction evidence="1">
        <text>1D-myo-inositol 2-acetamido-2-deoxy-alpha-D-glucopyranoside + H2O = 1D-myo-inositol 2-amino-2-deoxy-alpha-D-glucopyranoside + acetate</text>
        <dbReference type="Rhea" id="RHEA:26180"/>
        <dbReference type="ChEBI" id="CHEBI:15377"/>
        <dbReference type="ChEBI" id="CHEBI:30089"/>
        <dbReference type="ChEBI" id="CHEBI:52442"/>
        <dbReference type="ChEBI" id="CHEBI:58886"/>
        <dbReference type="EC" id="3.5.1.103"/>
    </reaction>
</comment>
<comment type="cofactor">
    <cofactor evidence="1">
        <name>Zn(2+)</name>
        <dbReference type="ChEBI" id="CHEBI:29105"/>
    </cofactor>
    <text evidence="1">Binds 1 zinc ion per subunit.</text>
</comment>
<comment type="similarity">
    <text evidence="1">Belongs to the MshB deacetylase family.</text>
</comment>
<organism>
    <name type="scientific">Mycolicibacterium vanbaalenii (strain DSM 7251 / JCM 13017 / BCRC 16820 / KCTC 9966 / NRRL B-24157 / PYR-1)</name>
    <name type="common">Mycobacterium vanbaalenii</name>
    <dbReference type="NCBI Taxonomy" id="350058"/>
    <lineage>
        <taxon>Bacteria</taxon>
        <taxon>Bacillati</taxon>
        <taxon>Actinomycetota</taxon>
        <taxon>Actinomycetes</taxon>
        <taxon>Mycobacteriales</taxon>
        <taxon>Mycobacteriaceae</taxon>
        <taxon>Mycolicibacterium</taxon>
    </lineage>
</organism>
<proteinExistence type="inferred from homology"/>
<protein>
    <recommendedName>
        <fullName evidence="1">1D-myo-inositol 2-acetamido-2-deoxy-alpha-D-glucopyranoside deacetylase</fullName>
        <shortName evidence="1">GlcNAc-Ins deacetylase</shortName>
        <ecNumber evidence="1">3.5.1.103</ecNumber>
    </recommendedName>
    <alternativeName>
        <fullName>N-acetyl-1-D-myo-inositol 2-amino-2-deoxy-alpha-D-glucopyranoside deacetylase</fullName>
    </alternativeName>
</protein>
<reference key="1">
    <citation type="submission" date="2006-12" db="EMBL/GenBank/DDBJ databases">
        <title>Complete sequence of Mycobacterium vanbaalenii PYR-1.</title>
        <authorList>
            <consortium name="US DOE Joint Genome Institute"/>
            <person name="Copeland A."/>
            <person name="Lucas S."/>
            <person name="Lapidus A."/>
            <person name="Barry K."/>
            <person name="Detter J.C."/>
            <person name="Glavina del Rio T."/>
            <person name="Hammon N."/>
            <person name="Israni S."/>
            <person name="Dalin E."/>
            <person name="Tice H."/>
            <person name="Pitluck S."/>
            <person name="Singan V."/>
            <person name="Schmutz J."/>
            <person name="Larimer F."/>
            <person name="Land M."/>
            <person name="Hauser L."/>
            <person name="Kyrpides N."/>
            <person name="Anderson I.J."/>
            <person name="Miller C."/>
            <person name="Richardson P."/>
        </authorList>
    </citation>
    <scope>NUCLEOTIDE SEQUENCE [LARGE SCALE GENOMIC DNA]</scope>
    <source>
        <strain>DSM 7251 / JCM 13017 / BCRC 16820 / KCTC 9966 / NRRL B-24157 / PYR-1</strain>
    </source>
</reference>